<proteinExistence type="evidence at protein level"/>
<sequence>MREIVHIQAGQCGNQIGTKFWEVISDEHGIDQAGGYVGDSALQLERISVYYNESSSKKYVPRAALVDLEPGTMDSVRSGPFGQLFRPDNFIFGQTGAGNNWAKGHYTEGAELVDSVLDVVRKECEHCDCLQGFQLTHSLGGGTGSGMGTLLISKIREEYPDRIMNTFSVMPSPKVSDTVVEPYNATLSVHQLVENTDETYCIDNEALYDICFRTLKLTTPTYGDLNHLVSATMSGVTTSLRFPGQLNADLRKLAVNMVPFPRLHFFMPGFAPLTARGSQQYRALTVPELTQQMFDAKNMMAACDPRHGRYLTVATVFRGPMSMKEVDEQMLAIQNKNSSYFVEWIPNNVKVAVCDIPPRGLKMASTFIGNSTAIQELFKRISEQFSAMFRRKAFLHWFTGEGMDEMEFTEAESNMNDLVSEYQQYQDATVNDGEEAFEDEDEEEINE</sequence>
<dbReference type="EMBL" id="BC008225">
    <property type="protein sequence ID" value="AAH08225.1"/>
    <property type="molecule type" value="mRNA"/>
</dbReference>
<dbReference type="CCDS" id="CCDS29321.1"/>
<dbReference type="RefSeq" id="NP_080749.2">
    <property type="nucleotide sequence ID" value="NM_026473.2"/>
</dbReference>
<dbReference type="SMR" id="Q922F4"/>
<dbReference type="BioGRID" id="212561">
    <property type="interactions" value="16"/>
</dbReference>
<dbReference type="FunCoup" id="Q922F4">
    <property type="interactions" value="730"/>
</dbReference>
<dbReference type="IntAct" id="Q922F4">
    <property type="interactions" value="8"/>
</dbReference>
<dbReference type="STRING" id="10090.ENSMUSP00000001513"/>
<dbReference type="GlyGen" id="Q922F4">
    <property type="glycosylation" value="6 sites, 2 N-linked glycans (2 sites), 1 O-linked glycan (4 sites)"/>
</dbReference>
<dbReference type="iPTMnet" id="Q922F4"/>
<dbReference type="MetOSite" id="Q922F4"/>
<dbReference type="PhosphoSitePlus" id="Q922F4"/>
<dbReference type="SwissPalm" id="Q922F4"/>
<dbReference type="jPOST" id="Q922F4"/>
<dbReference type="PaxDb" id="10090-ENSMUSP00000001513"/>
<dbReference type="ProteomicsDB" id="254649"/>
<dbReference type="Pumba" id="Q922F4"/>
<dbReference type="Antibodypedia" id="58515">
    <property type="antibodies" value="205 antibodies from 22 providers"/>
</dbReference>
<dbReference type="DNASU" id="67951"/>
<dbReference type="Ensembl" id="ENSMUST00000001513.8">
    <property type="protein sequence ID" value="ENSMUSP00000001513.7"/>
    <property type="gene ID" value="ENSMUSG00000001473.8"/>
</dbReference>
<dbReference type="GeneID" id="67951"/>
<dbReference type="KEGG" id="mmu:67951"/>
<dbReference type="UCSC" id="uc008fmd.1">
    <property type="organism name" value="mouse"/>
</dbReference>
<dbReference type="AGR" id="MGI:1915201"/>
<dbReference type="CTD" id="84617"/>
<dbReference type="MGI" id="MGI:1915201">
    <property type="gene designation" value="Tubb6"/>
</dbReference>
<dbReference type="VEuPathDB" id="HostDB:ENSMUSG00000001473"/>
<dbReference type="eggNOG" id="KOG1375">
    <property type="taxonomic scope" value="Eukaryota"/>
</dbReference>
<dbReference type="GeneTree" id="ENSGT00940000159977"/>
<dbReference type="HOGENOM" id="CLU_015718_1_1_1"/>
<dbReference type="InParanoid" id="Q922F4"/>
<dbReference type="OMA" id="FLTCCAI"/>
<dbReference type="OrthoDB" id="1662883at2759"/>
<dbReference type="PhylomeDB" id="Q922F4"/>
<dbReference type="TreeFam" id="TF300298"/>
<dbReference type="Reactome" id="R-MMU-190840">
    <property type="pathway name" value="Microtubule-dependent trafficking of connexons from Golgi to the plasma membrane"/>
</dbReference>
<dbReference type="Reactome" id="R-MMU-2132295">
    <property type="pathway name" value="MHC class II antigen presentation"/>
</dbReference>
<dbReference type="Reactome" id="R-MMU-2467813">
    <property type="pathway name" value="Separation of Sister Chromatids"/>
</dbReference>
<dbReference type="Reactome" id="R-MMU-2500257">
    <property type="pathway name" value="Resolution of Sister Chromatid Cohesion"/>
</dbReference>
<dbReference type="Reactome" id="R-MMU-3371497">
    <property type="pathway name" value="HSP90 chaperone cycle for steroid hormone receptors (SHR) in the presence of ligand"/>
</dbReference>
<dbReference type="Reactome" id="R-MMU-380320">
    <property type="pathway name" value="Recruitment of NuMA to mitotic centrosomes"/>
</dbReference>
<dbReference type="Reactome" id="R-MMU-437239">
    <property type="pathway name" value="Recycling pathway of L1"/>
</dbReference>
<dbReference type="Reactome" id="R-MMU-5610787">
    <property type="pathway name" value="Hedgehog 'off' state"/>
</dbReference>
<dbReference type="Reactome" id="R-MMU-5617833">
    <property type="pathway name" value="Cilium Assembly"/>
</dbReference>
<dbReference type="Reactome" id="R-MMU-5620924">
    <property type="pathway name" value="Intraflagellar transport"/>
</dbReference>
<dbReference type="Reactome" id="R-MMU-5626467">
    <property type="pathway name" value="RHO GTPases activate IQGAPs"/>
</dbReference>
<dbReference type="Reactome" id="R-MMU-5663220">
    <property type="pathway name" value="RHO GTPases Activate Formins"/>
</dbReference>
<dbReference type="Reactome" id="R-MMU-6807878">
    <property type="pathway name" value="COPI-mediated anterograde transport"/>
</dbReference>
<dbReference type="Reactome" id="R-MMU-6811434">
    <property type="pathway name" value="COPI-dependent Golgi-to-ER retrograde traffic"/>
</dbReference>
<dbReference type="Reactome" id="R-MMU-6811436">
    <property type="pathway name" value="COPI-independent Golgi-to-ER retrograde traffic"/>
</dbReference>
<dbReference type="Reactome" id="R-MMU-68877">
    <property type="pathway name" value="Mitotic Prometaphase"/>
</dbReference>
<dbReference type="Reactome" id="R-MMU-8852276">
    <property type="pathway name" value="The role of GTSE1 in G2/M progression after G2 checkpoint"/>
</dbReference>
<dbReference type="Reactome" id="R-MMU-8955332">
    <property type="pathway name" value="Carboxyterminal post-translational modifications of tubulin"/>
</dbReference>
<dbReference type="Reactome" id="R-MMU-9646399">
    <property type="pathway name" value="Aggrephagy"/>
</dbReference>
<dbReference type="Reactome" id="R-MMU-9648025">
    <property type="pathway name" value="EML4 and NUDC in mitotic spindle formation"/>
</dbReference>
<dbReference type="Reactome" id="R-MMU-9668328">
    <property type="pathway name" value="Sealing of the nuclear envelope (NE) by ESCRT-III"/>
</dbReference>
<dbReference type="Reactome" id="R-MMU-983189">
    <property type="pathway name" value="Kinesins"/>
</dbReference>
<dbReference type="Reactome" id="R-MMU-9833482">
    <property type="pathway name" value="PKR-mediated signaling"/>
</dbReference>
<dbReference type="BioGRID-ORCS" id="67951">
    <property type="hits" value="1 hit in 78 CRISPR screens"/>
</dbReference>
<dbReference type="ChiTaRS" id="Tubb6">
    <property type="organism name" value="mouse"/>
</dbReference>
<dbReference type="PRO" id="PR:Q922F4"/>
<dbReference type="Proteomes" id="UP000000589">
    <property type="component" value="Chromosome 18"/>
</dbReference>
<dbReference type="RNAct" id="Q922F4">
    <property type="molecule type" value="protein"/>
</dbReference>
<dbReference type="Bgee" id="ENSMUSG00000001473">
    <property type="expression patterns" value="Expressed in endothelial cell of lymphatic vessel and 241 other cell types or tissues"/>
</dbReference>
<dbReference type="ExpressionAtlas" id="Q922F4">
    <property type="expression patterns" value="baseline and differential"/>
</dbReference>
<dbReference type="GO" id="GO:0005737">
    <property type="term" value="C:cytoplasm"/>
    <property type="evidence" value="ECO:0007669"/>
    <property type="project" value="UniProtKB-KW"/>
</dbReference>
<dbReference type="GO" id="GO:0045171">
    <property type="term" value="C:intercellular bridge"/>
    <property type="evidence" value="ECO:0007669"/>
    <property type="project" value="Ensembl"/>
</dbReference>
<dbReference type="GO" id="GO:0005874">
    <property type="term" value="C:microtubule"/>
    <property type="evidence" value="ECO:0007669"/>
    <property type="project" value="UniProtKB-KW"/>
</dbReference>
<dbReference type="GO" id="GO:0072686">
    <property type="term" value="C:mitotic spindle"/>
    <property type="evidence" value="ECO:0007669"/>
    <property type="project" value="Ensembl"/>
</dbReference>
<dbReference type="GO" id="GO:0005525">
    <property type="term" value="F:GTP binding"/>
    <property type="evidence" value="ECO:0007669"/>
    <property type="project" value="UniProtKB-KW"/>
</dbReference>
<dbReference type="GO" id="GO:0003924">
    <property type="term" value="F:GTPase activity"/>
    <property type="evidence" value="ECO:0007669"/>
    <property type="project" value="InterPro"/>
</dbReference>
<dbReference type="GO" id="GO:0046872">
    <property type="term" value="F:metal ion binding"/>
    <property type="evidence" value="ECO:0007669"/>
    <property type="project" value="UniProtKB-KW"/>
</dbReference>
<dbReference type="GO" id="GO:0005200">
    <property type="term" value="F:structural constituent of cytoskeleton"/>
    <property type="evidence" value="ECO:0007669"/>
    <property type="project" value="InterPro"/>
</dbReference>
<dbReference type="GO" id="GO:0007017">
    <property type="term" value="P:microtubule-based process"/>
    <property type="evidence" value="ECO:0007669"/>
    <property type="project" value="InterPro"/>
</dbReference>
<dbReference type="CDD" id="cd02187">
    <property type="entry name" value="beta_tubulin"/>
    <property type="match status" value="1"/>
</dbReference>
<dbReference type="FunFam" id="1.10.287.600:FF:000002">
    <property type="entry name" value="Tubulin beta chain"/>
    <property type="match status" value="1"/>
</dbReference>
<dbReference type="FunFam" id="3.30.1330.20:FF:000002">
    <property type="entry name" value="Tubulin beta chain"/>
    <property type="match status" value="1"/>
</dbReference>
<dbReference type="FunFam" id="3.40.50.1440:FF:000003">
    <property type="entry name" value="Tubulin beta chain"/>
    <property type="match status" value="1"/>
</dbReference>
<dbReference type="Gene3D" id="1.10.287.600">
    <property type="entry name" value="Helix hairpin bin"/>
    <property type="match status" value="1"/>
</dbReference>
<dbReference type="Gene3D" id="3.30.1330.20">
    <property type="entry name" value="Tubulin/FtsZ, C-terminal domain"/>
    <property type="match status" value="1"/>
</dbReference>
<dbReference type="Gene3D" id="3.40.50.1440">
    <property type="entry name" value="Tubulin/FtsZ, GTPase domain"/>
    <property type="match status" value="1"/>
</dbReference>
<dbReference type="InterPro" id="IPR013838">
    <property type="entry name" value="Beta-tubulin_BS"/>
</dbReference>
<dbReference type="InterPro" id="IPR002453">
    <property type="entry name" value="Beta_tubulin"/>
</dbReference>
<dbReference type="InterPro" id="IPR008280">
    <property type="entry name" value="Tub_FtsZ_C"/>
</dbReference>
<dbReference type="InterPro" id="IPR000217">
    <property type="entry name" value="Tubulin"/>
</dbReference>
<dbReference type="InterPro" id="IPR037103">
    <property type="entry name" value="Tubulin/FtsZ-like_C"/>
</dbReference>
<dbReference type="InterPro" id="IPR018316">
    <property type="entry name" value="Tubulin/FtsZ_2-layer-sand-dom"/>
</dbReference>
<dbReference type="InterPro" id="IPR036525">
    <property type="entry name" value="Tubulin/FtsZ_GTPase_sf"/>
</dbReference>
<dbReference type="InterPro" id="IPR023123">
    <property type="entry name" value="Tubulin_C"/>
</dbReference>
<dbReference type="InterPro" id="IPR017975">
    <property type="entry name" value="Tubulin_CS"/>
</dbReference>
<dbReference type="InterPro" id="IPR003008">
    <property type="entry name" value="Tubulin_FtsZ_GTPase"/>
</dbReference>
<dbReference type="PANTHER" id="PTHR11588">
    <property type="entry name" value="TUBULIN"/>
    <property type="match status" value="1"/>
</dbReference>
<dbReference type="Pfam" id="PF00091">
    <property type="entry name" value="Tubulin"/>
    <property type="match status" value="1"/>
</dbReference>
<dbReference type="Pfam" id="PF03953">
    <property type="entry name" value="Tubulin_C"/>
    <property type="match status" value="1"/>
</dbReference>
<dbReference type="PRINTS" id="PR01163">
    <property type="entry name" value="BETATUBULIN"/>
</dbReference>
<dbReference type="PRINTS" id="PR01161">
    <property type="entry name" value="TUBULIN"/>
</dbReference>
<dbReference type="SMART" id="SM00864">
    <property type="entry name" value="Tubulin"/>
    <property type="match status" value="1"/>
</dbReference>
<dbReference type="SMART" id="SM00865">
    <property type="entry name" value="Tubulin_C"/>
    <property type="match status" value="1"/>
</dbReference>
<dbReference type="SUPFAM" id="SSF55307">
    <property type="entry name" value="Tubulin C-terminal domain-like"/>
    <property type="match status" value="1"/>
</dbReference>
<dbReference type="SUPFAM" id="SSF52490">
    <property type="entry name" value="Tubulin nucleotide-binding domain-like"/>
    <property type="match status" value="1"/>
</dbReference>
<dbReference type="PROSITE" id="PS00227">
    <property type="entry name" value="TUBULIN"/>
    <property type="match status" value="1"/>
</dbReference>
<dbReference type="PROSITE" id="PS00228">
    <property type="entry name" value="TUBULIN_B_AUTOREG"/>
    <property type="match status" value="1"/>
</dbReference>
<keyword id="KW-0963">Cytoplasm</keyword>
<keyword id="KW-0206">Cytoskeleton</keyword>
<keyword id="KW-0903">Direct protein sequencing</keyword>
<keyword id="KW-0342">GTP-binding</keyword>
<keyword id="KW-1017">Isopeptide bond</keyword>
<keyword id="KW-0460">Magnesium</keyword>
<keyword id="KW-0479">Metal-binding</keyword>
<keyword id="KW-0493">Microtubule</keyword>
<keyword id="KW-0547">Nucleotide-binding</keyword>
<keyword id="KW-0597">Phosphoprotein</keyword>
<keyword id="KW-1185">Reference proteome</keyword>
<evidence type="ECO:0000250" key="1"/>
<evidence type="ECO:0000250" key="2">
    <source>
        <dbReference type="UniProtKB" id="P02557"/>
    </source>
</evidence>
<evidence type="ECO:0000250" key="3">
    <source>
        <dbReference type="UniProtKB" id="P07437"/>
    </source>
</evidence>
<evidence type="ECO:0000250" key="4">
    <source>
        <dbReference type="UniProtKB" id="P68363"/>
    </source>
</evidence>
<evidence type="ECO:0000250" key="5">
    <source>
        <dbReference type="UniProtKB" id="Q13509"/>
    </source>
</evidence>
<evidence type="ECO:0000250" key="6">
    <source>
        <dbReference type="UniProtKB" id="Q2T9S0"/>
    </source>
</evidence>
<evidence type="ECO:0000250" key="7">
    <source>
        <dbReference type="UniProtKB" id="Q71U36"/>
    </source>
</evidence>
<evidence type="ECO:0000250" key="8">
    <source>
        <dbReference type="UniProtKB" id="Q9BUF5"/>
    </source>
</evidence>
<evidence type="ECO:0000269" key="9">
    <source>
    </source>
</evidence>
<evidence type="ECO:0000269" key="10">
    <source>
    </source>
</evidence>
<evidence type="ECO:0000269" key="11">
    <source>
    </source>
</evidence>
<evidence type="ECO:0000269" key="12">
    <source>
    </source>
</evidence>
<evidence type="ECO:0000305" key="13"/>
<name>TBB6_MOUSE</name>
<feature type="chain" id="PRO_0000048256" description="Tubulin beta-6 chain">
    <location>
        <begin position="1"/>
        <end position="447"/>
    </location>
</feature>
<feature type="short sequence motif" description="MREI motif" evidence="3">
    <location>
        <begin position="1"/>
        <end position="4"/>
    </location>
</feature>
<feature type="binding site" evidence="5">
    <location>
        <position position="11"/>
    </location>
    <ligand>
        <name>GTP</name>
        <dbReference type="ChEBI" id="CHEBI:37565"/>
    </ligand>
</feature>
<feature type="binding site" evidence="4">
    <location>
        <position position="69"/>
    </location>
    <ligand>
        <name>GTP</name>
        <dbReference type="ChEBI" id="CHEBI:37565"/>
    </ligand>
</feature>
<feature type="binding site" evidence="4">
    <location>
        <position position="69"/>
    </location>
    <ligand>
        <name>Mg(2+)</name>
        <dbReference type="ChEBI" id="CHEBI:18420"/>
    </ligand>
</feature>
<feature type="binding site" evidence="5">
    <location>
        <position position="138"/>
    </location>
    <ligand>
        <name>GTP</name>
        <dbReference type="ChEBI" id="CHEBI:37565"/>
    </ligand>
</feature>
<feature type="binding site" evidence="5">
    <location>
        <position position="142"/>
    </location>
    <ligand>
        <name>GTP</name>
        <dbReference type="ChEBI" id="CHEBI:37565"/>
    </ligand>
</feature>
<feature type="binding site" evidence="5">
    <location>
        <position position="143"/>
    </location>
    <ligand>
        <name>GTP</name>
        <dbReference type="ChEBI" id="CHEBI:37565"/>
    </ligand>
</feature>
<feature type="binding site" evidence="5">
    <location>
        <position position="144"/>
    </location>
    <ligand>
        <name>GTP</name>
        <dbReference type="ChEBI" id="CHEBI:37565"/>
    </ligand>
</feature>
<feature type="binding site" evidence="5">
    <location>
        <position position="204"/>
    </location>
    <ligand>
        <name>GTP</name>
        <dbReference type="ChEBI" id="CHEBI:37565"/>
    </ligand>
</feature>
<feature type="binding site" evidence="5">
    <location>
        <position position="226"/>
    </location>
    <ligand>
        <name>GTP</name>
        <dbReference type="ChEBI" id="CHEBI:37565"/>
    </ligand>
</feature>
<feature type="modified residue" description="Phosphoserine; by CDK1" evidence="8">
    <location>
        <position position="172"/>
    </location>
</feature>
<feature type="modified residue" description="5-glutamyl polyglutamate" evidence="6">
    <location>
        <position position="438"/>
    </location>
</feature>
<comment type="function">
    <text evidence="2">Tubulin is the major constituent of microtubules, a cylinder consisting of laterally associated linear protofilaments composed of alpha- and beta-tubulin heterodimers. Microtubules grow by the addition of GTP-tubulin dimers to the microtubule end, where a stabilizing cap forms. Below the cap, tubulin dimers are in GDP-bound state, owing to GTPase activity of alpha-tubulin.</text>
</comment>
<comment type="cofactor">
    <cofactor evidence="4">
        <name>Mg(2+)</name>
        <dbReference type="ChEBI" id="CHEBI:18420"/>
    </cofactor>
</comment>
<comment type="subunit">
    <text>Dimer of alpha and beta chains. A typical microtubule is a hollow water-filled tube with an outer diameter of 25 nm and an inner diameter of 15 nM. Alpha-beta heterodimers associate head-to-tail to form protofilaments running lengthwise along the microtubule wall with the beta-tubulin subunit facing the microtubule plus end conferring a structural polarity. Microtubules usually have 13 protofilaments but different protofilament numbers can be found in some organisms and specialized cells.</text>
</comment>
<comment type="subcellular location">
    <subcellularLocation>
        <location evidence="1">Cytoplasm</location>
        <location evidence="1">Cytoskeleton</location>
    </subcellularLocation>
</comment>
<comment type="domain">
    <text>The highly acidic C-terminal region may bind cations such as calcium.</text>
</comment>
<comment type="domain">
    <text evidence="3">The MREI motif is common among all beta-tubulin isoforms and may be critical for tubulin autoregulation.</text>
</comment>
<comment type="PTM">
    <text evidence="10 11 12">Some glutamate residues at the C-terminus are polyglycylated, resulting in polyglycine chains on the gamma-carboxyl group. Glycylation is mainly limited to tubulin incorporated into axonemes (cilia and flagella) whereas glutamylation is prevalent in neuronal cells, centrioles, axonemes, and the mitotic spindle. Both modifications can coexist on the same protein on adjacent residues, and lowering polyglycylation levels increases polyglutamylation, and reciprocally. Cilia and flagella glycylation is required for their stability and maintenance. Flagella glycylation controls sperm motility (PubMed:33414192).</text>
</comment>
<comment type="PTM">
    <text evidence="7 9 11">Some glutamate residues at the C-terminus are polyglutamylated, resulting in polyglutamate chains on the gamma-carboxyl group (PubMed:15890843). Polyglutamylation plays a key role in microtubule severing by spastin (SPAST). SPAST preferentially recognizes and acts on microtubules decorated with short polyglutamate tails: severing activity by SPAST increases as the number of glutamates per tubulin rises from one to eight, but decreases beyond this glutamylation threshold (By similarity). Glutamylation is also involved in cilia motility (PubMed:23897886).</text>
</comment>
<comment type="PTM">
    <text evidence="8">Phosphorylated on Ser-172 by CDK1 during the cell cycle, from metaphase to telophase, but not in interphase. This phosphorylation inhibits tubulin incorporation into microtubules.</text>
</comment>
<comment type="similarity">
    <text evidence="13">Belongs to the tubulin family.</text>
</comment>
<protein>
    <recommendedName>
        <fullName>Tubulin beta-6 chain</fullName>
    </recommendedName>
</protein>
<organism>
    <name type="scientific">Mus musculus</name>
    <name type="common">Mouse</name>
    <dbReference type="NCBI Taxonomy" id="10090"/>
    <lineage>
        <taxon>Eukaryota</taxon>
        <taxon>Metazoa</taxon>
        <taxon>Chordata</taxon>
        <taxon>Craniata</taxon>
        <taxon>Vertebrata</taxon>
        <taxon>Euteleostomi</taxon>
        <taxon>Mammalia</taxon>
        <taxon>Eutheria</taxon>
        <taxon>Euarchontoglires</taxon>
        <taxon>Glires</taxon>
        <taxon>Rodentia</taxon>
        <taxon>Myomorpha</taxon>
        <taxon>Muroidea</taxon>
        <taxon>Muridae</taxon>
        <taxon>Murinae</taxon>
        <taxon>Mus</taxon>
        <taxon>Mus</taxon>
    </lineage>
</organism>
<gene>
    <name type="primary">Tubb6</name>
</gene>
<reference key="1">
    <citation type="journal article" date="2004" name="Genome Res.">
        <title>The status, quality, and expansion of the NIH full-length cDNA project: the Mammalian Gene Collection (MGC).</title>
        <authorList>
            <consortium name="The MGC Project Team"/>
        </authorList>
    </citation>
    <scope>NUCLEOTIDE SEQUENCE [LARGE SCALE MRNA]</scope>
    <source>
        <strain>FVB/N</strain>
        <tissue>Mammary tumor</tissue>
    </source>
</reference>
<reference key="2">
    <citation type="submission" date="2007-04" db="UniProtKB">
        <authorList>
            <person name="Lubec G."/>
            <person name="Kang S.U."/>
        </authorList>
    </citation>
    <scope>PROTEIN SEQUENCE OF 104-121; 242-251; 253-262; 283-297; 310-318; 337-350 AND 363-379</scope>
    <scope>IDENTIFICATION BY MASS SPECTROMETRY</scope>
    <source>
        <strain>C57BL/6J</strain>
        <tissue>Brain</tissue>
    </source>
</reference>
<reference key="3">
    <citation type="journal article" date="2005" name="Science">
        <title>Tubulin polyglutamylase enzymes are members of the TTL domain protein family.</title>
        <authorList>
            <person name="Janke C."/>
            <person name="Rogowski K."/>
            <person name="Wloga D."/>
            <person name="Regnard C."/>
            <person name="Kajava A.V."/>
            <person name="Strub J.-M."/>
            <person name="Temurak N."/>
            <person name="van Dijk J."/>
            <person name="Boucher D."/>
            <person name="van Dorsselaer A."/>
            <person name="Suryavanshi S."/>
            <person name="Gaertig J."/>
            <person name="Edde B."/>
        </authorList>
    </citation>
    <scope>GLUTAMYLATION</scope>
</reference>
<reference key="4">
    <citation type="journal article" date="2009" name="Cell">
        <title>Evolutionary divergence of enzymatic mechanisms for posttranslational polyglycylation.</title>
        <authorList>
            <person name="Rogowski K."/>
            <person name="Juge F."/>
            <person name="van Dijk J."/>
            <person name="Wloga D."/>
            <person name="Strub J.-M."/>
            <person name="Levilliers N."/>
            <person name="Thomas D."/>
            <person name="Bre M.-H."/>
            <person name="Van Dorsselaer A."/>
            <person name="Gaertig J."/>
            <person name="Janke C."/>
        </authorList>
    </citation>
    <scope>GLYCYLATION</scope>
</reference>
<reference key="5">
    <citation type="journal article" date="2010" name="Cell">
        <title>A tissue-specific atlas of mouse protein phosphorylation and expression.</title>
        <authorList>
            <person name="Huttlin E.L."/>
            <person name="Jedrychowski M.P."/>
            <person name="Elias J.E."/>
            <person name="Goswami T."/>
            <person name="Rad R."/>
            <person name="Beausoleil S.A."/>
            <person name="Villen J."/>
            <person name="Haas W."/>
            <person name="Sowa M.E."/>
            <person name="Gygi S.P."/>
        </authorList>
    </citation>
    <scope>IDENTIFICATION BY MASS SPECTROMETRY [LARGE SCALE ANALYSIS]</scope>
    <source>
        <tissue>Brain</tissue>
        <tissue>Brown adipose tissue</tissue>
        <tissue>Heart</tissue>
        <tissue>Kidney</tissue>
        <tissue>Liver</tissue>
        <tissue>Lung</tissue>
        <tissue>Pancreas</tissue>
        <tissue>Spleen</tissue>
        <tissue>Testis</tissue>
    </source>
</reference>
<reference key="6">
    <citation type="journal article" date="2013" name="J. Cell Biol.">
        <title>Tubulin glycylases and glutamylases have distinct functions in stabilization and motility of ependymal cilia.</title>
        <authorList>
            <person name="Bosch Grau M."/>
            <person name="Gonzalez Curto G."/>
            <person name="Rocha C."/>
            <person name="Magiera M.M."/>
            <person name="Marques Sousa P."/>
            <person name="Giordano T."/>
            <person name="Spassky N."/>
            <person name="Janke C."/>
        </authorList>
    </citation>
    <scope>GLYCYLATION</scope>
    <scope>GLUTAMYLATION</scope>
</reference>
<reference key="7">
    <citation type="journal article" date="2021" name="Science">
        <title>Tubulin glycylation controls axonemal dynein activity, flagellar beat, and male fertility.</title>
        <authorList>
            <person name="Gadadhar S."/>
            <person name="Alvarez Viar G."/>
            <person name="Hansen J.N."/>
            <person name="Gong A."/>
            <person name="Kostarev A."/>
            <person name="Ialy-Radio C."/>
            <person name="Leboucher S."/>
            <person name="Whitfield M."/>
            <person name="Ziyyat A."/>
            <person name="Toure A."/>
            <person name="Alvarez L."/>
            <person name="Pigino G."/>
            <person name="Janke C."/>
        </authorList>
    </citation>
    <scope>GLYCYLATION</scope>
</reference>
<accession>Q922F4</accession>